<name>YBEY_IDILO</name>
<reference key="1">
    <citation type="journal article" date="2004" name="Proc. Natl. Acad. Sci. U.S.A.">
        <title>Genome sequence of the deep-sea gamma-proteobacterium Idiomarina loihiensis reveals amino acid fermentation as a source of carbon and energy.</title>
        <authorList>
            <person name="Hou S."/>
            <person name="Saw J.H."/>
            <person name="Lee K.S."/>
            <person name="Freitas T.A."/>
            <person name="Belisle C."/>
            <person name="Kawarabayasi Y."/>
            <person name="Donachie S.P."/>
            <person name="Pikina A."/>
            <person name="Galperin M.Y."/>
            <person name="Koonin E.V."/>
            <person name="Makarova K.S."/>
            <person name="Omelchenko M.V."/>
            <person name="Sorokin A."/>
            <person name="Wolf Y.I."/>
            <person name="Li Q.X."/>
            <person name="Keum Y.S."/>
            <person name="Campbell S."/>
            <person name="Denery J."/>
            <person name="Aizawa S."/>
            <person name="Shibata S."/>
            <person name="Malahoff A."/>
            <person name="Alam M."/>
        </authorList>
    </citation>
    <scope>NUCLEOTIDE SEQUENCE [LARGE SCALE GENOMIC DNA]</scope>
    <source>
        <strain>ATCC BAA-735 / DSM 15497 / L2-TR</strain>
    </source>
</reference>
<accession>Q5QYC3</accession>
<evidence type="ECO:0000255" key="1">
    <source>
        <dbReference type="HAMAP-Rule" id="MF_00009"/>
    </source>
</evidence>
<organism>
    <name type="scientific">Idiomarina loihiensis (strain ATCC BAA-735 / DSM 15497 / L2-TR)</name>
    <dbReference type="NCBI Taxonomy" id="283942"/>
    <lineage>
        <taxon>Bacteria</taxon>
        <taxon>Pseudomonadati</taxon>
        <taxon>Pseudomonadota</taxon>
        <taxon>Gammaproteobacteria</taxon>
        <taxon>Alteromonadales</taxon>
        <taxon>Idiomarinaceae</taxon>
        <taxon>Idiomarina</taxon>
    </lineage>
</organism>
<feature type="chain" id="PRO_0000102468" description="Endoribonuclease YbeY">
    <location>
        <begin position="1"/>
        <end position="163"/>
    </location>
</feature>
<feature type="binding site" evidence="1">
    <location>
        <position position="116"/>
    </location>
    <ligand>
        <name>Zn(2+)</name>
        <dbReference type="ChEBI" id="CHEBI:29105"/>
        <note>catalytic</note>
    </ligand>
</feature>
<feature type="binding site" evidence="1">
    <location>
        <position position="120"/>
    </location>
    <ligand>
        <name>Zn(2+)</name>
        <dbReference type="ChEBI" id="CHEBI:29105"/>
        <note>catalytic</note>
    </ligand>
</feature>
<feature type="binding site" evidence="1">
    <location>
        <position position="126"/>
    </location>
    <ligand>
        <name>Zn(2+)</name>
        <dbReference type="ChEBI" id="CHEBI:29105"/>
        <note>catalytic</note>
    </ligand>
</feature>
<gene>
    <name evidence="1" type="primary">ybeY</name>
    <name type="ordered locus">IL0943</name>
</gene>
<proteinExistence type="inferred from homology"/>
<sequence length="163" mass="18395">MADLTLDYQLADGITKAPEENAVHSWVAATLDYLQENDKAVELTVRIAALEEAQQLNNEFRNKDYATNVLSFPFNSPVELPVTLLGDLVICQSVVEREAEEQQKSAIDHWTHMVIHGTLHLLGYDHIEDDEAEEMEQIERNILASLGISDPYQTADNMELNTQ</sequence>
<keyword id="KW-0963">Cytoplasm</keyword>
<keyword id="KW-0255">Endonuclease</keyword>
<keyword id="KW-0378">Hydrolase</keyword>
<keyword id="KW-0479">Metal-binding</keyword>
<keyword id="KW-0540">Nuclease</keyword>
<keyword id="KW-1185">Reference proteome</keyword>
<keyword id="KW-0690">Ribosome biogenesis</keyword>
<keyword id="KW-0698">rRNA processing</keyword>
<keyword id="KW-0862">Zinc</keyword>
<protein>
    <recommendedName>
        <fullName evidence="1">Endoribonuclease YbeY</fullName>
        <ecNumber evidence="1">3.1.-.-</ecNumber>
    </recommendedName>
</protein>
<comment type="function">
    <text evidence="1">Single strand-specific metallo-endoribonuclease involved in late-stage 70S ribosome quality control and in maturation of the 3' terminus of the 16S rRNA.</text>
</comment>
<comment type="cofactor">
    <cofactor evidence="1">
        <name>Zn(2+)</name>
        <dbReference type="ChEBI" id="CHEBI:29105"/>
    </cofactor>
    <text evidence="1">Binds 1 zinc ion.</text>
</comment>
<comment type="subcellular location">
    <subcellularLocation>
        <location evidence="1">Cytoplasm</location>
    </subcellularLocation>
</comment>
<comment type="similarity">
    <text evidence="1">Belongs to the endoribonuclease YbeY family.</text>
</comment>
<dbReference type="EC" id="3.1.-.-" evidence="1"/>
<dbReference type="EMBL" id="AE017340">
    <property type="protein sequence ID" value="AAV81783.1"/>
    <property type="molecule type" value="Genomic_DNA"/>
</dbReference>
<dbReference type="RefSeq" id="WP_011234194.1">
    <property type="nucleotide sequence ID" value="NC_006512.1"/>
</dbReference>
<dbReference type="SMR" id="Q5QYC3"/>
<dbReference type="STRING" id="283942.IL0943"/>
<dbReference type="GeneID" id="41336103"/>
<dbReference type="KEGG" id="ilo:IL0943"/>
<dbReference type="eggNOG" id="COG0319">
    <property type="taxonomic scope" value="Bacteria"/>
</dbReference>
<dbReference type="HOGENOM" id="CLU_106710_0_1_6"/>
<dbReference type="OrthoDB" id="9807740at2"/>
<dbReference type="Proteomes" id="UP000001171">
    <property type="component" value="Chromosome"/>
</dbReference>
<dbReference type="GO" id="GO:0005737">
    <property type="term" value="C:cytoplasm"/>
    <property type="evidence" value="ECO:0007669"/>
    <property type="project" value="UniProtKB-SubCell"/>
</dbReference>
<dbReference type="GO" id="GO:0004222">
    <property type="term" value="F:metalloendopeptidase activity"/>
    <property type="evidence" value="ECO:0007669"/>
    <property type="project" value="InterPro"/>
</dbReference>
<dbReference type="GO" id="GO:0004521">
    <property type="term" value="F:RNA endonuclease activity"/>
    <property type="evidence" value="ECO:0007669"/>
    <property type="project" value="UniProtKB-UniRule"/>
</dbReference>
<dbReference type="GO" id="GO:0008270">
    <property type="term" value="F:zinc ion binding"/>
    <property type="evidence" value="ECO:0007669"/>
    <property type="project" value="UniProtKB-UniRule"/>
</dbReference>
<dbReference type="GO" id="GO:0006364">
    <property type="term" value="P:rRNA processing"/>
    <property type="evidence" value="ECO:0007669"/>
    <property type="project" value="UniProtKB-UniRule"/>
</dbReference>
<dbReference type="Gene3D" id="3.40.390.30">
    <property type="entry name" value="Metalloproteases ('zincins'), catalytic domain"/>
    <property type="match status" value="1"/>
</dbReference>
<dbReference type="HAMAP" id="MF_00009">
    <property type="entry name" value="Endoribonucl_YbeY"/>
    <property type="match status" value="1"/>
</dbReference>
<dbReference type="InterPro" id="IPR023091">
    <property type="entry name" value="MetalPrtase_cat_dom_sf_prd"/>
</dbReference>
<dbReference type="InterPro" id="IPR002036">
    <property type="entry name" value="YbeY"/>
</dbReference>
<dbReference type="InterPro" id="IPR020549">
    <property type="entry name" value="YbeY_CS"/>
</dbReference>
<dbReference type="NCBIfam" id="TIGR00043">
    <property type="entry name" value="rRNA maturation RNase YbeY"/>
    <property type="match status" value="1"/>
</dbReference>
<dbReference type="PANTHER" id="PTHR46986">
    <property type="entry name" value="ENDORIBONUCLEASE YBEY, CHLOROPLASTIC"/>
    <property type="match status" value="1"/>
</dbReference>
<dbReference type="PANTHER" id="PTHR46986:SF1">
    <property type="entry name" value="ENDORIBONUCLEASE YBEY, CHLOROPLASTIC"/>
    <property type="match status" value="1"/>
</dbReference>
<dbReference type="Pfam" id="PF02130">
    <property type="entry name" value="YbeY"/>
    <property type="match status" value="1"/>
</dbReference>
<dbReference type="SUPFAM" id="SSF55486">
    <property type="entry name" value="Metalloproteases ('zincins'), catalytic domain"/>
    <property type="match status" value="1"/>
</dbReference>
<dbReference type="PROSITE" id="PS01306">
    <property type="entry name" value="UPF0054"/>
    <property type="match status" value="1"/>
</dbReference>